<organism>
    <name type="scientific">Arabidopsis thaliana</name>
    <name type="common">Mouse-ear cress</name>
    <dbReference type="NCBI Taxonomy" id="3702"/>
    <lineage>
        <taxon>Eukaryota</taxon>
        <taxon>Viridiplantae</taxon>
        <taxon>Streptophyta</taxon>
        <taxon>Embryophyta</taxon>
        <taxon>Tracheophyta</taxon>
        <taxon>Spermatophyta</taxon>
        <taxon>Magnoliopsida</taxon>
        <taxon>eudicotyledons</taxon>
        <taxon>Gunneridae</taxon>
        <taxon>Pentapetalae</taxon>
        <taxon>rosids</taxon>
        <taxon>malvids</taxon>
        <taxon>Brassicales</taxon>
        <taxon>Brassicaceae</taxon>
        <taxon>Camelineae</taxon>
        <taxon>Arabidopsis</taxon>
    </lineage>
</organism>
<keyword id="KW-1185">Reference proteome</keyword>
<protein>
    <recommendedName>
        <fullName>Protein LURP-one-related 11</fullName>
    </recommendedName>
</protein>
<proteinExistence type="evidence at transcript level"/>
<name>LOR11_ARATH</name>
<accession>Q9LUM1</accession>
<sequence length="230" mass="26280">MQIYRRPFETKTWQYRICPAETMVKIHPDLTTSGAGEETSSPYLTTEQESFTIWMKSLVFNTNGCTVFDSKGNIIYRVDNYNSKSCREVYLMDLSGHVLFTLRRQKFGLFKTWEGYRSSSATVESTTKLEYFRVKNNVFQVPNKDSSSSYRVNAGSCRNDEQYCYKMVTRGSSLAIEDNCGKLLAEVKRKQSINGLKLGDDVLTMMVESQVDHSFIIGLVLAHSLINCIL</sequence>
<dbReference type="EMBL" id="AB022220">
    <property type="protein sequence ID" value="BAB01032.1"/>
    <property type="molecule type" value="Genomic_DNA"/>
</dbReference>
<dbReference type="EMBL" id="CP002686">
    <property type="protein sequence ID" value="AEE75495.1"/>
    <property type="molecule type" value="Genomic_DNA"/>
</dbReference>
<dbReference type="EMBL" id="AY600570">
    <property type="protein sequence ID" value="AAT68369.1"/>
    <property type="molecule type" value="mRNA"/>
</dbReference>
<dbReference type="EMBL" id="DQ056592">
    <property type="protein sequence ID" value="AAY78740.1"/>
    <property type="molecule type" value="mRNA"/>
</dbReference>
<dbReference type="RefSeq" id="NP_188043.2">
    <property type="nucleotide sequence ID" value="NM_112284.3"/>
</dbReference>
<dbReference type="SMR" id="Q9LUM1"/>
<dbReference type="PaxDb" id="3702-AT3G14260.1"/>
<dbReference type="EnsemblPlants" id="AT3G14260.1">
    <property type="protein sequence ID" value="AT3G14260.1"/>
    <property type="gene ID" value="AT3G14260"/>
</dbReference>
<dbReference type="GeneID" id="820646"/>
<dbReference type="Gramene" id="AT3G14260.1">
    <property type="protein sequence ID" value="AT3G14260.1"/>
    <property type="gene ID" value="AT3G14260"/>
</dbReference>
<dbReference type="KEGG" id="ath:AT3G14260"/>
<dbReference type="Araport" id="AT3G14260"/>
<dbReference type="TAIR" id="AT3G14260"/>
<dbReference type="eggNOG" id="ENOG502RYHC">
    <property type="taxonomic scope" value="Eukaryota"/>
</dbReference>
<dbReference type="HOGENOM" id="CLU_063146_2_1_1"/>
<dbReference type="InParanoid" id="Q9LUM1"/>
<dbReference type="OMA" id="EQYHYKM"/>
<dbReference type="PhylomeDB" id="Q9LUM1"/>
<dbReference type="PRO" id="PR:Q9LUM1"/>
<dbReference type="Proteomes" id="UP000006548">
    <property type="component" value="Chromosome 3"/>
</dbReference>
<dbReference type="ExpressionAtlas" id="Q9LUM1">
    <property type="expression patterns" value="baseline and differential"/>
</dbReference>
<dbReference type="Gene3D" id="2.40.160.200">
    <property type="entry name" value="LURP1-related"/>
    <property type="match status" value="1"/>
</dbReference>
<dbReference type="InterPro" id="IPR007612">
    <property type="entry name" value="LOR"/>
</dbReference>
<dbReference type="InterPro" id="IPR038595">
    <property type="entry name" value="LOR_sf"/>
</dbReference>
<dbReference type="InterPro" id="IPR025659">
    <property type="entry name" value="Tubby-like_C"/>
</dbReference>
<dbReference type="PANTHER" id="PTHR31087">
    <property type="match status" value="1"/>
</dbReference>
<dbReference type="PANTHER" id="PTHR31087:SF153">
    <property type="entry name" value="PROTEIN LURP-ONE-RELATED 11"/>
    <property type="match status" value="1"/>
</dbReference>
<dbReference type="Pfam" id="PF04525">
    <property type="entry name" value="LOR"/>
    <property type="match status" value="1"/>
</dbReference>
<dbReference type="SUPFAM" id="SSF54518">
    <property type="entry name" value="Tubby C-terminal domain-like"/>
    <property type="match status" value="1"/>
</dbReference>
<gene>
    <name type="ordered locus">At3g14260</name>
    <name type="ORF">MLN21.4</name>
</gene>
<reference key="1">
    <citation type="journal article" date="2000" name="DNA Res.">
        <title>Structural analysis of Arabidopsis thaliana chromosome 3. I. Sequence features of the regions of 4,504,864 bp covered by sixty P1 and TAC clones.</title>
        <authorList>
            <person name="Sato S."/>
            <person name="Nakamura Y."/>
            <person name="Kaneko T."/>
            <person name="Katoh T."/>
            <person name="Asamizu E."/>
            <person name="Tabata S."/>
        </authorList>
    </citation>
    <scope>NUCLEOTIDE SEQUENCE [LARGE SCALE GENOMIC DNA]</scope>
    <source>
        <strain>cv. Columbia</strain>
    </source>
</reference>
<reference key="2">
    <citation type="journal article" date="2017" name="Plant J.">
        <title>Araport11: a complete reannotation of the Arabidopsis thaliana reference genome.</title>
        <authorList>
            <person name="Cheng C.Y."/>
            <person name="Krishnakumar V."/>
            <person name="Chan A.P."/>
            <person name="Thibaud-Nissen F."/>
            <person name="Schobel S."/>
            <person name="Town C.D."/>
        </authorList>
    </citation>
    <scope>GENOME REANNOTATION</scope>
    <source>
        <strain>cv. Columbia</strain>
    </source>
</reference>
<reference key="3">
    <citation type="submission" date="2005-05" db="EMBL/GenBank/DDBJ databases">
        <authorList>
            <person name="Underwood B.A."/>
            <person name="Xiao Y.-L."/>
            <person name="Moskal W.A. Jr."/>
            <person name="Monaghan E.L."/>
            <person name="Wang W."/>
            <person name="Redman J.C."/>
            <person name="Wu H.C."/>
            <person name="Utterback T."/>
            <person name="Town C.D."/>
        </authorList>
    </citation>
    <scope>NUCLEOTIDE SEQUENCE [LARGE SCALE MRNA]</scope>
    <source>
        <strain>cv. Columbia</strain>
    </source>
</reference>
<evidence type="ECO:0000250" key="1"/>
<evidence type="ECO:0000305" key="2"/>
<feature type="chain" id="PRO_0000399243" description="Protein LURP-one-related 11">
    <location>
        <begin position="1"/>
        <end position="230"/>
    </location>
</feature>
<comment type="function">
    <text evidence="1">Might be related to the phospholipid scramblase and tubby-like superfamily of membrane tethered transcription factors.</text>
</comment>
<comment type="similarity">
    <text evidence="2">Belongs to the LOR family.</text>
</comment>